<feature type="chain" id="PRO_0000185911" description="Glutathione S-transferase P">
    <location>
        <begin position="1"/>
        <end position="208"/>
    </location>
</feature>
<feature type="domain" description="GST N-terminal">
    <location>
        <begin position="1"/>
        <end position="78"/>
    </location>
</feature>
<feature type="domain" description="GST C-terminal">
    <location>
        <begin position="80"/>
        <end position="202"/>
    </location>
</feature>
<feature type="binding site" evidence="1">
    <location>
        <position position="7"/>
    </location>
    <ligand>
        <name>glutathione</name>
        <dbReference type="ChEBI" id="CHEBI:57925"/>
    </ligand>
</feature>
<feature type="binding site" evidence="1">
    <location>
        <position position="38"/>
    </location>
    <ligand>
        <name>glutathione</name>
        <dbReference type="ChEBI" id="CHEBI:57925"/>
    </ligand>
</feature>
<feature type="binding site" evidence="1">
    <location>
        <position position="42"/>
    </location>
    <ligand>
        <name>glutathione</name>
        <dbReference type="ChEBI" id="CHEBI:57925"/>
    </ligand>
</feature>
<feature type="binding site" evidence="1">
    <location>
        <begin position="49"/>
        <end position="50"/>
    </location>
    <ligand>
        <name>glutathione</name>
        <dbReference type="ChEBI" id="CHEBI:57925"/>
    </ligand>
</feature>
<feature type="binding site" evidence="1">
    <location>
        <begin position="62"/>
        <end position="63"/>
    </location>
    <ligand>
        <name>glutathione</name>
        <dbReference type="ChEBI" id="CHEBI:57925"/>
    </ligand>
</feature>
<keyword id="KW-1185">Reference proteome</keyword>
<keyword id="KW-0808">Transferase</keyword>
<organism>
    <name type="scientific">Caenorhabditis elegans</name>
    <dbReference type="NCBI Taxonomy" id="6239"/>
    <lineage>
        <taxon>Eukaryota</taxon>
        <taxon>Metazoa</taxon>
        <taxon>Ecdysozoa</taxon>
        <taxon>Nematoda</taxon>
        <taxon>Chromadorea</taxon>
        <taxon>Rhabditida</taxon>
        <taxon>Rhabditina</taxon>
        <taxon>Rhabditomorpha</taxon>
        <taxon>Rhabditoidea</taxon>
        <taxon>Rhabditidae</taxon>
        <taxon>Peloderinae</taxon>
        <taxon>Caenorhabditis</taxon>
    </lineage>
</organism>
<gene>
    <name type="primary">gst-1</name>
    <name type="ORF">R107.7</name>
</gene>
<protein>
    <recommendedName>
        <fullName>Glutathione S-transferase P</fullName>
        <ecNumber evidence="1">2.5.1.18</ecNumber>
    </recommendedName>
    <alternativeName>
        <fullName>GST class-pi</fullName>
    </alternativeName>
</protein>
<proteinExistence type="evidence at protein level"/>
<evidence type="ECO:0000250" key="1">
    <source>
        <dbReference type="UniProtKB" id="P09211"/>
    </source>
</evidence>
<evidence type="ECO:0000269" key="2">
    <source>
    </source>
</evidence>
<evidence type="ECO:0000305" key="3"/>
<name>GSTP1_CAEEL</name>
<dbReference type="EC" id="2.5.1.18" evidence="1"/>
<dbReference type="EMBL" id="X13689">
    <property type="protein sequence ID" value="CAA31979.1"/>
    <property type="molecule type" value="mRNA"/>
</dbReference>
<dbReference type="EMBL" id="Z14092">
    <property type="protein sequence ID" value="CAA78471.1"/>
    <property type="molecule type" value="Genomic_DNA"/>
</dbReference>
<dbReference type="PIR" id="S03615">
    <property type="entry name" value="S03615"/>
</dbReference>
<dbReference type="RefSeq" id="NP_499006.1">
    <property type="nucleotide sequence ID" value="NM_066605.9"/>
</dbReference>
<dbReference type="SMR" id="P10299"/>
<dbReference type="BioGRID" id="41480">
    <property type="interactions" value="37"/>
</dbReference>
<dbReference type="DIP" id="DIP-24298N"/>
<dbReference type="FunCoup" id="P10299">
    <property type="interactions" value="169"/>
</dbReference>
<dbReference type="IntAct" id="P10299">
    <property type="interactions" value="1"/>
</dbReference>
<dbReference type="STRING" id="6239.R107.7.2"/>
<dbReference type="PaxDb" id="6239-R107.7.2"/>
<dbReference type="PeptideAtlas" id="P10299"/>
<dbReference type="EnsemblMetazoa" id="R107.7.1">
    <property type="protein sequence ID" value="R107.7.1"/>
    <property type="gene ID" value="WBGene00001749"/>
</dbReference>
<dbReference type="GeneID" id="176281"/>
<dbReference type="KEGG" id="cel:CELE_R107.7"/>
<dbReference type="UCSC" id="R107.7.1">
    <property type="organism name" value="c. elegans"/>
</dbReference>
<dbReference type="AGR" id="WB:WBGene00001749"/>
<dbReference type="CTD" id="176281"/>
<dbReference type="WormBase" id="R107.7">
    <property type="protein sequence ID" value="CE00302"/>
    <property type="gene ID" value="WBGene00001749"/>
    <property type="gene designation" value="gst-1"/>
</dbReference>
<dbReference type="eggNOG" id="KOG1695">
    <property type="taxonomic scope" value="Eukaryota"/>
</dbReference>
<dbReference type="GeneTree" id="ENSGT00940000166750"/>
<dbReference type="HOGENOM" id="CLU_039475_2_1_1"/>
<dbReference type="InParanoid" id="P10299"/>
<dbReference type="OMA" id="KKSCVFG"/>
<dbReference type="OrthoDB" id="4951845at2759"/>
<dbReference type="PhylomeDB" id="P10299"/>
<dbReference type="Reactome" id="R-CEL-156590">
    <property type="pathway name" value="Glutathione conjugation"/>
</dbReference>
<dbReference type="Reactome" id="R-CEL-3299685">
    <property type="pathway name" value="Detoxification of Reactive Oxygen Species"/>
</dbReference>
<dbReference type="Reactome" id="R-CEL-6798695">
    <property type="pathway name" value="Neutrophil degranulation"/>
</dbReference>
<dbReference type="Reactome" id="R-CEL-9753281">
    <property type="pathway name" value="Paracetamol ADME"/>
</dbReference>
<dbReference type="PRO" id="PR:P10299"/>
<dbReference type="Proteomes" id="UP000001940">
    <property type="component" value="Chromosome III"/>
</dbReference>
<dbReference type="GO" id="GO:0005829">
    <property type="term" value="C:cytosol"/>
    <property type="evidence" value="ECO:0000318"/>
    <property type="project" value="GO_Central"/>
</dbReference>
<dbReference type="GO" id="GO:0004364">
    <property type="term" value="F:glutathione transferase activity"/>
    <property type="evidence" value="ECO:0000314"/>
    <property type="project" value="WormBase"/>
</dbReference>
<dbReference type="GO" id="GO:1990748">
    <property type="term" value="P:cellular detoxification"/>
    <property type="evidence" value="ECO:0000316"/>
    <property type="project" value="UniProtKB"/>
</dbReference>
<dbReference type="GO" id="GO:0050829">
    <property type="term" value="P:defense response to Gram-negative bacterium"/>
    <property type="evidence" value="ECO:0000315"/>
    <property type="project" value="WormBase"/>
</dbReference>
<dbReference type="GO" id="GO:0006749">
    <property type="term" value="P:glutathione metabolic process"/>
    <property type="evidence" value="ECO:0000318"/>
    <property type="project" value="GO_Central"/>
</dbReference>
<dbReference type="GO" id="GO:0045087">
    <property type="term" value="P:innate immune response"/>
    <property type="evidence" value="ECO:0000315"/>
    <property type="project" value="WormBase"/>
</dbReference>
<dbReference type="GO" id="GO:0036498">
    <property type="term" value="P:IRE1-mediated unfolded protein response"/>
    <property type="evidence" value="ECO:0007007"/>
    <property type="project" value="WormBase"/>
</dbReference>
<dbReference type="GO" id="GO:1905803">
    <property type="term" value="P:negative regulation of cellular response to manganese ion"/>
    <property type="evidence" value="ECO:0000316"/>
    <property type="project" value="UniProtKB"/>
</dbReference>
<dbReference type="GO" id="GO:1905804">
    <property type="term" value="P:positive regulation of cellular response to manganese ion"/>
    <property type="evidence" value="ECO:0000315"/>
    <property type="project" value="UniProtKB"/>
</dbReference>
<dbReference type="CDD" id="cd03210">
    <property type="entry name" value="GST_C_Pi"/>
    <property type="match status" value="1"/>
</dbReference>
<dbReference type="CDD" id="cd03076">
    <property type="entry name" value="GST_N_Pi"/>
    <property type="match status" value="1"/>
</dbReference>
<dbReference type="FunFam" id="3.40.30.10:FF:000168">
    <property type="entry name" value="Glutathione S-transferase 2"/>
    <property type="match status" value="1"/>
</dbReference>
<dbReference type="FunFam" id="1.20.1050.10:FF:000020">
    <property type="entry name" value="Glutathione S-transferase P 1"/>
    <property type="match status" value="1"/>
</dbReference>
<dbReference type="Gene3D" id="1.20.1050.10">
    <property type="match status" value="1"/>
</dbReference>
<dbReference type="Gene3D" id="3.40.30.10">
    <property type="entry name" value="Glutaredoxin"/>
    <property type="match status" value="1"/>
</dbReference>
<dbReference type="InterPro" id="IPR010987">
    <property type="entry name" value="Glutathione-S-Trfase_C-like"/>
</dbReference>
<dbReference type="InterPro" id="IPR036282">
    <property type="entry name" value="Glutathione-S-Trfase_C_sf"/>
</dbReference>
<dbReference type="InterPro" id="IPR040079">
    <property type="entry name" value="Glutathione_S-Trfase"/>
</dbReference>
<dbReference type="InterPro" id="IPR004045">
    <property type="entry name" value="Glutathione_S-Trfase_N"/>
</dbReference>
<dbReference type="InterPro" id="IPR004046">
    <property type="entry name" value="GST_C"/>
</dbReference>
<dbReference type="InterPro" id="IPR003082">
    <property type="entry name" value="GST_pi"/>
</dbReference>
<dbReference type="InterPro" id="IPR050213">
    <property type="entry name" value="GST_superfamily"/>
</dbReference>
<dbReference type="InterPro" id="IPR036249">
    <property type="entry name" value="Thioredoxin-like_sf"/>
</dbReference>
<dbReference type="PANTHER" id="PTHR11571">
    <property type="entry name" value="GLUTATHIONE S-TRANSFERASE"/>
    <property type="match status" value="1"/>
</dbReference>
<dbReference type="PANTHER" id="PTHR11571:SF141">
    <property type="entry name" value="GLUTATHIONE S-TRANSFERASE"/>
    <property type="match status" value="1"/>
</dbReference>
<dbReference type="Pfam" id="PF14497">
    <property type="entry name" value="GST_C_3"/>
    <property type="match status" value="1"/>
</dbReference>
<dbReference type="Pfam" id="PF02798">
    <property type="entry name" value="GST_N"/>
    <property type="match status" value="1"/>
</dbReference>
<dbReference type="PRINTS" id="PR01268">
    <property type="entry name" value="GSTRNSFRASEP"/>
</dbReference>
<dbReference type="SFLD" id="SFLDG01205">
    <property type="entry name" value="AMPS.1"/>
    <property type="match status" value="1"/>
</dbReference>
<dbReference type="SFLD" id="SFLDS00019">
    <property type="entry name" value="Glutathione_Transferase_(cytos"/>
    <property type="match status" value="1"/>
</dbReference>
<dbReference type="SUPFAM" id="SSF47616">
    <property type="entry name" value="GST C-terminal domain-like"/>
    <property type="match status" value="1"/>
</dbReference>
<dbReference type="SUPFAM" id="SSF52833">
    <property type="entry name" value="Thioredoxin-like"/>
    <property type="match status" value="1"/>
</dbReference>
<dbReference type="PROSITE" id="PS50405">
    <property type="entry name" value="GST_CTER"/>
    <property type="match status" value="1"/>
</dbReference>
<dbReference type="PROSITE" id="PS50404">
    <property type="entry name" value="GST_NTER"/>
    <property type="match status" value="1"/>
</dbReference>
<comment type="function">
    <text evidence="1 2">Conjugation of reduced glutathione to a wide number of exogenous and endogenous hydrophobic electrophiles (By similarity). Prevents dopaminergic CEP neuron degeneration in response to Mn(2+) (PubMed:23721876).</text>
</comment>
<comment type="catalytic activity">
    <reaction evidence="1">
        <text>RX + glutathione = an S-substituted glutathione + a halide anion + H(+)</text>
        <dbReference type="Rhea" id="RHEA:16437"/>
        <dbReference type="ChEBI" id="CHEBI:15378"/>
        <dbReference type="ChEBI" id="CHEBI:16042"/>
        <dbReference type="ChEBI" id="CHEBI:17792"/>
        <dbReference type="ChEBI" id="CHEBI:57925"/>
        <dbReference type="ChEBI" id="CHEBI:90779"/>
        <dbReference type="EC" id="2.5.1.18"/>
    </reaction>
    <physiologicalReaction direction="left-to-right" evidence="1">
        <dbReference type="Rhea" id="RHEA:16438"/>
    </physiologicalReaction>
</comment>
<comment type="subunit">
    <text>Homodimer.</text>
</comment>
<comment type="interaction">
    <interactant intactId="EBI-326030">
        <id>P10299</id>
    </interactant>
    <interactant intactId="EBI-326040">
        <id>P91505</id>
        <label>gst-23</label>
    </interactant>
    <organismsDiffer>false</organismsDiffer>
    <experiments>5</experiments>
</comment>
<comment type="tissue specificity">
    <text evidence="2">Expressed in dopaminergic (DA) neuron (at protein levels).</text>
</comment>
<comment type="induction">
    <text evidence="2">By manganese.</text>
</comment>
<comment type="disruption phenotype">
    <text evidence="2">RNAi-mediated knockdown causes an increase in Mn(2+)-mediated dopaminergic CEP neuron degeneration.</text>
</comment>
<comment type="similarity">
    <text evidence="3">Belongs to the GST superfamily. Pi family.</text>
</comment>
<reference key="1">
    <citation type="journal article" date="1989" name="Nucleic Acids Res.">
        <title>A Caenorhabditis elegans cDNA that encodes a product resembling the rat glutathione S-transferase P subunit.</title>
        <authorList>
            <person name="Weston K."/>
            <person name="Yochem J."/>
            <person name="Greenwald I."/>
        </authorList>
    </citation>
    <scope>NUCLEOTIDE SEQUENCE [MRNA]</scope>
    <source>
        <strain>Bristol N2</strain>
    </source>
</reference>
<reference key="2">
    <citation type="journal article" date="1994" name="Nature">
        <title>2.2 Mb of contiguous nucleotide sequence from chromosome III of C. elegans.</title>
        <authorList>
            <person name="Wilson R."/>
            <person name="Ainscough R."/>
            <person name="Anderson K."/>
            <person name="Baynes C."/>
            <person name="Berks M."/>
            <person name="Bonfield J."/>
            <person name="Burton J."/>
            <person name="Connell M."/>
            <person name="Copsey T."/>
            <person name="Cooper J."/>
            <person name="Coulson A."/>
            <person name="Craxton M."/>
            <person name="Dear S."/>
            <person name="Du Z."/>
            <person name="Durbin R."/>
            <person name="Favello A."/>
            <person name="Fraser A."/>
            <person name="Fulton L."/>
            <person name="Gardner A."/>
            <person name="Green P."/>
            <person name="Hawkins T."/>
            <person name="Hillier L."/>
            <person name="Jier M."/>
            <person name="Johnston L."/>
            <person name="Jones M."/>
            <person name="Kershaw J."/>
            <person name="Kirsten J."/>
            <person name="Laisster N."/>
            <person name="Latreille P."/>
            <person name="Lightning J."/>
            <person name="Lloyd C."/>
            <person name="Mortimore B."/>
            <person name="O'Callaghan M."/>
            <person name="Parsons J."/>
            <person name="Percy C."/>
            <person name="Rifken L."/>
            <person name="Roopra A."/>
            <person name="Saunders D."/>
            <person name="Shownkeen R."/>
            <person name="Sims M."/>
            <person name="Smaldon N."/>
            <person name="Smith A."/>
            <person name="Smith M."/>
            <person name="Sonnhammer E."/>
            <person name="Staden R."/>
            <person name="Sulston J."/>
            <person name="Thierry-Mieg J."/>
            <person name="Thomas K."/>
            <person name="Vaudin M."/>
            <person name="Vaughan K."/>
            <person name="Waterston R."/>
            <person name="Watson A."/>
            <person name="Weinstock L."/>
            <person name="Wilkinson-Sproat J."/>
            <person name="Wohldman P."/>
        </authorList>
    </citation>
    <scope>NUCLEOTIDE SEQUENCE [LARGE SCALE GENOMIC DNA]</scope>
    <source>
        <strain>Bristol N2</strain>
    </source>
</reference>
<reference key="3">
    <citation type="journal article" date="1998" name="Science">
        <title>Genome sequence of the nematode C. elegans: a platform for investigating biology.</title>
        <authorList>
            <consortium name="The C. elegans sequencing consortium"/>
        </authorList>
    </citation>
    <scope>NUCLEOTIDE SEQUENCE [LARGE SCALE GENOMIC DNA]</scope>
    <source>
        <strain>Bristol N2</strain>
    </source>
</reference>
<reference key="4">
    <citation type="journal article" date="2013" name="NeuroToxicology">
        <title>The Nrf2/SKN-1-dependent glutathione S-transferase pi homologue GST-1 inhibits dopamine neuron degeneration in a Caenorhabditis elegans model of manganism.</title>
        <authorList>
            <person name="Settivari R."/>
            <person name="VanDuyn N."/>
            <person name="LeVora J."/>
            <person name="Nass R."/>
        </authorList>
    </citation>
    <scope>FUNCTION</scope>
    <scope>INDUCTION BY MANGANESE</scope>
    <scope>TISSUE SPECIFICITY</scope>
    <scope>DISRUPTION PHENOTYPE</scope>
</reference>
<accession>P10299</accession>
<sequence>MTLKLTYFDIHGLAEPIRLLLADKQVAYEDHRVTYEQWADIKPKMIFGQVPCLLSGDEEIVQSGAIIRHLARLNGLNGSNETETTFIDMFYEGLRDLHTKYTTMIYRNYEDGKAPYIKDVLPGELARLEKLFHTYKNGEHYVIGDKESYADYVLFEELDIHLILTPNALDGVPALKKFHERFAERPNIKAYLNKRAAINPPVNGNGKQ</sequence>